<name>A85B_MYCAV</name>
<dbReference type="EC" id="2.3.1.122"/>
<dbReference type="EC" id="2.3.1.20"/>
<dbReference type="EMBL" id="X63437">
    <property type="protein sequence ID" value="CAA45032.1"/>
    <property type="molecule type" value="Genomic_DNA"/>
</dbReference>
<dbReference type="SMR" id="Q06947"/>
<dbReference type="ESTHER" id="mycav-a85b">
    <property type="family name" value="A85-Mycolyl-transferase"/>
</dbReference>
<dbReference type="GO" id="GO:0005576">
    <property type="term" value="C:extracellular region"/>
    <property type="evidence" value="ECO:0007669"/>
    <property type="project" value="UniProtKB-SubCell"/>
</dbReference>
<dbReference type="GO" id="GO:0004144">
    <property type="term" value="F:diacylglycerol O-acyltransferase activity"/>
    <property type="evidence" value="ECO:0007669"/>
    <property type="project" value="UniProtKB-EC"/>
</dbReference>
<dbReference type="GO" id="GO:0050348">
    <property type="term" value="F:trehalose O-mycolyltransferase activity"/>
    <property type="evidence" value="ECO:0007669"/>
    <property type="project" value="UniProtKB-EC"/>
</dbReference>
<dbReference type="FunFam" id="3.40.50.1820:FF:000086">
    <property type="entry name" value="Diacylglycerol acyltransferase/mycolyltransferase Ag85C"/>
    <property type="match status" value="1"/>
</dbReference>
<dbReference type="Gene3D" id="3.40.50.1820">
    <property type="entry name" value="alpha/beta hydrolase"/>
    <property type="match status" value="1"/>
</dbReference>
<dbReference type="InterPro" id="IPR029058">
    <property type="entry name" value="AB_hydrolase_fold"/>
</dbReference>
<dbReference type="InterPro" id="IPR000801">
    <property type="entry name" value="Esterase-like"/>
</dbReference>
<dbReference type="InterPro" id="IPR050583">
    <property type="entry name" value="Mycobacterial_A85_antigen"/>
</dbReference>
<dbReference type="PANTHER" id="PTHR48098:SF1">
    <property type="entry name" value="DIACYLGLYCEROL ACYLTRANSFERASE_MYCOLYLTRANSFERASE AG85A"/>
    <property type="match status" value="1"/>
</dbReference>
<dbReference type="PANTHER" id="PTHR48098">
    <property type="entry name" value="ENTEROCHELIN ESTERASE-RELATED"/>
    <property type="match status" value="1"/>
</dbReference>
<dbReference type="Pfam" id="PF00756">
    <property type="entry name" value="Esterase"/>
    <property type="match status" value="1"/>
</dbReference>
<dbReference type="SUPFAM" id="SSF53474">
    <property type="entry name" value="alpha/beta-Hydrolases"/>
    <property type="match status" value="1"/>
</dbReference>
<evidence type="ECO:0000250" key="1"/>
<evidence type="ECO:0000305" key="2"/>
<accession>Q06947</accession>
<feature type="signal peptide" evidence="1">
    <location>
        <begin position="1"/>
        <end position="40"/>
    </location>
</feature>
<feature type="chain" id="PRO_0000000216" description="Diacylglycerol acyltransferase/mycolyltransferase Ag85B">
    <location>
        <begin position="41"/>
        <end position="330"/>
    </location>
</feature>
<feature type="region of interest" description="Fibronectin-binding">
    <location>
        <begin position="98"/>
        <end position="108"/>
    </location>
</feature>
<feature type="active site" description="Nucleophile" evidence="1">
    <location>
        <position position="166"/>
    </location>
</feature>
<feature type="active site" evidence="1">
    <location>
        <position position="270"/>
    </location>
</feature>
<feature type="active site" evidence="1">
    <location>
        <position position="302"/>
    </location>
</feature>
<feature type="binding site" evidence="1">
    <location>
        <begin position="82"/>
        <end position="83"/>
    </location>
    <ligand>
        <name>substrate</name>
    </ligand>
</feature>
<feature type="binding site" evidence="1">
    <location>
        <position position="166"/>
    </location>
    <ligand>
        <name>substrate</name>
    </ligand>
</feature>
<feature type="binding site" evidence="1">
    <location>
        <position position="194"/>
    </location>
    <ligand>
        <name>substrate</name>
    </ligand>
</feature>
<feature type="binding site" evidence="1">
    <location>
        <begin position="272"/>
        <end position="275"/>
    </location>
    <ligand>
        <name>substrate</name>
    </ligand>
</feature>
<feature type="binding site" evidence="1">
    <location>
        <position position="279"/>
    </location>
    <ligand>
        <name>substrate</name>
    </ligand>
</feature>
<feature type="binding site" evidence="1">
    <location>
        <begin position="302"/>
        <end position="304"/>
    </location>
    <ligand>
        <name>substrate</name>
    </ligand>
</feature>
<feature type="disulfide bond" evidence="1">
    <location>
        <begin position="127"/>
        <end position="132"/>
    </location>
</feature>
<sequence>MTDLSEKVRAWGRRLLVGAAAAVTLPGLIGLAGGAATANAFSRPGLPVEYLQVPSAGMGRDIKVQFQSGGNGSPAVYLLDGLRAQDDYNGWDINTPAFEWYYQSGLSVIMPVGGQSSFYADWYQPACGKAGCSTYKWETFLTSELPSYLASNKGVKRTGNAAVGISMSGSSAMILAVNHPDQFIYAGSLSALLDPSQGMGPSLIGLAMGDAGGYKADAMWGPSSDPAWQRNDPSLHIPELVGHNTRLWLYCGNGTPSELGGANMPAEFLENFVRSSNLKFQDAYNGAGGHNAVFNFNANGTHSWEYWGAQLNAMKPDLQGTLGASPGGGG</sequence>
<organism>
    <name type="scientific">Mycobacterium avium</name>
    <dbReference type="NCBI Taxonomy" id="1764"/>
    <lineage>
        <taxon>Bacteria</taxon>
        <taxon>Bacillati</taxon>
        <taxon>Actinomycetota</taxon>
        <taxon>Actinomycetes</taxon>
        <taxon>Mycobacteriales</taxon>
        <taxon>Mycobacteriaceae</taxon>
        <taxon>Mycobacterium</taxon>
        <taxon>Mycobacterium avium complex (MAC)</taxon>
    </lineage>
</organism>
<proteinExistence type="inferred from homology"/>
<reference key="1">
    <citation type="journal article" date="1993" name="Infect. Immun.">
        <title>Cloning and sequencing of the gene for alpha antigen from Mycobacterium avium and mapping of B-cell epitopes.</title>
        <authorList>
            <person name="Ohara N."/>
            <person name="Matsuo K."/>
            <person name="Yamaguchi R."/>
            <person name="Yamazaki A."/>
            <person name="Tasaka H."/>
            <person name="Yamada T."/>
        </authorList>
    </citation>
    <scope>NUCLEOTIDE SEQUENCE [GENOMIC DNA]</scope>
</reference>
<comment type="function">
    <text evidence="1">The antigen 85 proteins (FbpA, FbpB, FbpC) are responsible for the high affinity of mycobacteria for fibronectin, a large adhesive glycoprotein, which facilitates the attachment of M.tuberculosis to murine alveolar macrophages (AMs). They also help to maintain the integrity of the cell wall by catalyzing the transfer of mycolic acids to cell wall arabinogalactan and through the synthesis of alpha,alpha-trehalose dimycolate (TDM, cord factor). They catalyze the transfer of a mycoloyl residue from one molecule of alpha,alpha-trehalose monomycolate (TMM) to another TMM, leading to the formation of TDM (By similarity).</text>
</comment>
<comment type="catalytic activity">
    <reaction>
        <text>2 alpha,alpha'-trehalose 6-mycolate = alpha,alpha'-trehalose 6,6'-bismycolate + alpha,alpha-trehalose</text>
        <dbReference type="Rhea" id="RHEA:23472"/>
        <dbReference type="ChEBI" id="CHEBI:16551"/>
        <dbReference type="ChEBI" id="CHEBI:18195"/>
        <dbReference type="ChEBI" id="CHEBI:18234"/>
        <dbReference type="EC" id="2.3.1.122"/>
    </reaction>
</comment>
<comment type="catalytic activity">
    <reaction>
        <text>an acyl-CoA + a 1,2-diacyl-sn-glycerol = a triacyl-sn-glycerol + CoA</text>
        <dbReference type="Rhea" id="RHEA:10868"/>
        <dbReference type="ChEBI" id="CHEBI:17815"/>
        <dbReference type="ChEBI" id="CHEBI:57287"/>
        <dbReference type="ChEBI" id="CHEBI:58342"/>
        <dbReference type="ChEBI" id="CHEBI:64615"/>
        <dbReference type="EC" id="2.3.1.20"/>
    </reaction>
</comment>
<comment type="subcellular location">
    <subcellularLocation>
        <location evidence="1">Secreted</location>
    </subcellularLocation>
</comment>
<comment type="similarity">
    <text evidence="2">Belongs to the mycobacterial A85 antigen family.</text>
</comment>
<keyword id="KW-0012">Acyltransferase</keyword>
<keyword id="KW-1015">Disulfide bond</keyword>
<keyword id="KW-0964">Secreted</keyword>
<keyword id="KW-0732">Signal</keyword>
<keyword id="KW-0808">Transferase</keyword>
<gene>
    <name type="primary">fbpB</name>
</gene>
<protein>
    <recommendedName>
        <fullName>Diacylglycerol acyltransferase/mycolyltransferase Ag85B</fullName>
        <shortName>DGAT</shortName>
        <ecNumber>2.3.1.122</ecNumber>
        <ecNumber>2.3.1.20</ecNumber>
    </recommendedName>
    <alternativeName>
        <fullName>30 kDa extracellular protein</fullName>
    </alternativeName>
    <alternativeName>
        <fullName>Acyl-CoA:diacylglycerol acyltransferase</fullName>
    </alternativeName>
    <alternativeName>
        <fullName>Antigen 85 complex B</fullName>
        <shortName>85B</shortName>
        <shortName>Ag85B</shortName>
    </alternativeName>
    <alternativeName>
        <fullName>Extracellular alpha-antigen</fullName>
    </alternativeName>
    <alternativeName>
        <fullName>Fibronectin-binding protein B</fullName>
        <shortName>Fbps B</shortName>
    </alternativeName>
</protein>